<accession>Q5FPE5</accession>
<name>GMDH_GLUOX</name>
<sequence length="266" mass="28678">MPAPYKDRFAGKKVLVTGASQGIGEATALRFAEEGAQVALNGRKEDKLIAVREKLPKVSGGEHPIATGDISKEDDVKRLVAESIKAMGGLDVLVCNAGYQIPSPSEDIKLEDFEGVMAVNVTGVMLPCREVIRYWLENGIKGTIIVNSSVHQIIPKPHYLGYSASKGAVGNIVRTLALEYATRGIRVNAVAPGAIVTPINMSWIDDPEQYKAVSSHIPMKRPGESREIADAITFLAAEDSTYITGQTLYVDGGLTLYGDFENNWSS</sequence>
<gene>
    <name evidence="6" type="ordered locus">GOX2015</name>
</gene>
<reference key="1">
    <citation type="journal article" date="2005" name="Nat. Biotechnol.">
        <title>Complete genome sequence of the acetic acid bacterium Gluconobacter oxydans.</title>
        <authorList>
            <person name="Prust C."/>
            <person name="Hoffmeister M."/>
            <person name="Liesegang H."/>
            <person name="Wiezer A."/>
            <person name="Fricke W.F."/>
            <person name="Ehrenreich A."/>
            <person name="Gottschalk G."/>
            <person name="Deppenmeier U."/>
        </authorList>
    </citation>
    <scope>NUCLEOTIDE SEQUENCE [LARGE SCALE GENOMIC DNA]</scope>
    <source>
        <strain>621H</strain>
    </source>
</reference>
<reference key="2">
    <citation type="journal article" date="2010" name="Appl. Microbiol. Biotechnol.">
        <title>Characterization of enzymes involved in the central metabolism of Gluconobacter oxydans.</title>
        <authorList>
            <person name="Rauch B."/>
            <person name="Pahlke J."/>
            <person name="Schweiger P."/>
            <person name="Deppenmeier U."/>
        </authorList>
    </citation>
    <scope>FUNCTION</scope>
    <scope>CATALYTIC ACTIVITY</scope>
    <scope>BIOPHYSICOCHEMICAL PROPERTIES</scope>
    <scope>SUBUNIT</scope>
    <source>
        <strain>621H</strain>
    </source>
</reference>
<feature type="chain" id="PRO_0000434581" description="Glucose 1-dehydrogenase">
    <location>
        <begin position="1"/>
        <end position="266"/>
    </location>
</feature>
<feature type="active site" description="Proton acceptor" evidence="3">
    <location>
        <position position="162"/>
    </location>
</feature>
<feature type="binding site" evidence="2">
    <location>
        <begin position="15"/>
        <end position="39"/>
    </location>
    <ligand>
        <name>NADP(+)</name>
        <dbReference type="ChEBI" id="CHEBI:58349"/>
    </ligand>
</feature>
<feature type="binding site" evidence="1">
    <location>
        <position position="149"/>
    </location>
    <ligand>
        <name>substrate</name>
    </ligand>
</feature>
<keyword id="KW-0521">NADP</keyword>
<keyword id="KW-0560">Oxidoreductase</keyword>
<keyword id="KW-1185">Reference proteome</keyword>
<evidence type="ECO:0000250" key="1"/>
<evidence type="ECO:0000250" key="2">
    <source>
        <dbReference type="UniProtKB" id="P40288"/>
    </source>
</evidence>
<evidence type="ECO:0000255" key="3">
    <source>
        <dbReference type="PROSITE-ProRule" id="PRU10001"/>
    </source>
</evidence>
<evidence type="ECO:0000269" key="4">
    <source>
    </source>
</evidence>
<evidence type="ECO:0000305" key="5"/>
<evidence type="ECO:0000312" key="6">
    <source>
        <dbReference type="EMBL" id="AAW61751.1"/>
    </source>
</evidence>
<proteinExistence type="evidence at protein level"/>
<organism>
    <name type="scientific">Gluconobacter oxydans (strain 621H)</name>
    <name type="common">Gluconobacter suboxydans</name>
    <dbReference type="NCBI Taxonomy" id="290633"/>
    <lineage>
        <taxon>Bacteria</taxon>
        <taxon>Pseudomonadati</taxon>
        <taxon>Pseudomonadota</taxon>
        <taxon>Alphaproteobacteria</taxon>
        <taxon>Acetobacterales</taxon>
        <taxon>Acetobacteraceae</taxon>
        <taxon>Gluconobacter</taxon>
    </lineage>
</organism>
<dbReference type="EC" id="1.1.1.119" evidence="4"/>
<dbReference type="EMBL" id="CP000009">
    <property type="protein sequence ID" value="AAW61751.1"/>
    <property type="molecule type" value="Genomic_DNA"/>
</dbReference>
<dbReference type="RefSeq" id="WP_011253528.1">
    <property type="nucleotide sequence ID" value="NC_006677.1"/>
</dbReference>
<dbReference type="SMR" id="Q5FPE5"/>
<dbReference type="STRING" id="290633.GOX2015"/>
<dbReference type="KEGG" id="gox:GOX2015"/>
<dbReference type="eggNOG" id="COG1028">
    <property type="taxonomic scope" value="Bacteria"/>
</dbReference>
<dbReference type="HOGENOM" id="CLU_010194_1_3_5"/>
<dbReference type="Proteomes" id="UP000006375">
    <property type="component" value="Chromosome"/>
</dbReference>
<dbReference type="GO" id="GO:0047935">
    <property type="term" value="F:glucose 1-dehydrogenase (NADP+) activity"/>
    <property type="evidence" value="ECO:0007669"/>
    <property type="project" value="UniProtKB-EC"/>
</dbReference>
<dbReference type="FunFam" id="3.40.50.720:FF:000084">
    <property type="entry name" value="Short-chain dehydrogenase reductase"/>
    <property type="match status" value="1"/>
</dbReference>
<dbReference type="Gene3D" id="3.40.50.720">
    <property type="entry name" value="NAD(P)-binding Rossmann-like Domain"/>
    <property type="match status" value="1"/>
</dbReference>
<dbReference type="InterPro" id="IPR036291">
    <property type="entry name" value="NAD(P)-bd_dom_sf"/>
</dbReference>
<dbReference type="InterPro" id="IPR020904">
    <property type="entry name" value="Sc_DH/Rdtase_CS"/>
</dbReference>
<dbReference type="InterPro" id="IPR002347">
    <property type="entry name" value="SDR_fam"/>
</dbReference>
<dbReference type="NCBIfam" id="NF005559">
    <property type="entry name" value="PRK07231.1"/>
    <property type="match status" value="1"/>
</dbReference>
<dbReference type="PANTHER" id="PTHR43669">
    <property type="entry name" value="5-KETO-D-GLUCONATE 5-REDUCTASE"/>
    <property type="match status" value="1"/>
</dbReference>
<dbReference type="PANTHER" id="PTHR43669:SF3">
    <property type="entry name" value="ALCOHOL DEHYDROGENASE, PUTATIVE (AFU_ORTHOLOGUE AFUA_3G03445)-RELATED"/>
    <property type="match status" value="1"/>
</dbReference>
<dbReference type="Pfam" id="PF13561">
    <property type="entry name" value="adh_short_C2"/>
    <property type="match status" value="1"/>
</dbReference>
<dbReference type="PRINTS" id="PR00081">
    <property type="entry name" value="GDHRDH"/>
</dbReference>
<dbReference type="PRINTS" id="PR00080">
    <property type="entry name" value="SDRFAMILY"/>
</dbReference>
<dbReference type="SUPFAM" id="SSF51735">
    <property type="entry name" value="NAD(P)-binding Rossmann-fold domains"/>
    <property type="match status" value="1"/>
</dbReference>
<dbReference type="PROSITE" id="PS00061">
    <property type="entry name" value="ADH_SHORT"/>
    <property type="match status" value="1"/>
</dbReference>
<protein>
    <recommendedName>
        <fullName evidence="5">Glucose 1-dehydrogenase</fullName>
        <ecNumber evidence="4">1.1.1.119</ecNumber>
    </recommendedName>
</protein>
<comment type="function">
    <text evidence="4">Oxidizes both D-glucose and D-mannose, but is 15 times more catalytically efficient with mannose. Strictly dependent on NADP.</text>
</comment>
<comment type="catalytic activity">
    <reaction evidence="4">
        <text>D-glucose + NADP(+) = D-glucono-1,5-lactone + NADPH + H(+)</text>
        <dbReference type="Rhea" id="RHEA:14405"/>
        <dbReference type="ChEBI" id="CHEBI:4167"/>
        <dbReference type="ChEBI" id="CHEBI:15378"/>
        <dbReference type="ChEBI" id="CHEBI:16217"/>
        <dbReference type="ChEBI" id="CHEBI:57783"/>
        <dbReference type="ChEBI" id="CHEBI:58349"/>
        <dbReference type="EC" id="1.1.1.119"/>
    </reaction>
</comment>
<comment type="biophysicochemical properties">
    <kinetics>
        <KM evidence="4">2.47 mM for mannose</KM>
        <KM evidence="4">29.6 mM for glucose</KM>
        <KM evidence="4">27.7 uM for NADP</KM>
        <Vmax evidence="4">178.0 umol/min/mg enzyme</Vmax>
        <text evidence="4">kcat is 84.8 sec(-1) with glucose as substrate. kcat is 106 sec(-1) with mannose as substrate.</text>
    </kinetics>
</comment>
<comment type="subunit">
    <text evidence="4">Homotetramer or homooctamer.</text>
</comment>
<comment type="similarity">
    <text evidence="5">Belongs to the short-chain dehydrogenases/reductases (SDR) family.</text>
</comment>